<dbReference type="EMBL" id="Y17833">
    <property type="protein sequence ID" value="CAA76883.1"/>
    <property type="status" value="ALT_INIT"/>
    <property type="molecule type" value="Genomic_DNA"/>
</dbReference>
<dbReference type="EMBL" id="X92887">
    <property type="protein sequence ID" value="CAA63481.1"/>
    <property type="molecule type" value="Genomic_DNA"/>
</dbReference>
<dbReference type="EMBL" id="AF023261">
    <property type="protein sequence ID" value="AAC16971.1"/>
    <property type="molecule type" value="Genomic_DNA"/>
</dbReference>
<dbReference type="IntAct" id="O71037">
    <property type="interactions" value="1"/>
</dbReference>
<dbReference type="GlyCosmos" id="O71037">
    <property type="glycosylation" value="11 sites, No reported glycans"/>
</dbReference>
<dbReference type="iPTMnet" id="O71037"/>
<dbReference type="PhosphoSitePlus" id="O71037"/>
<dbReference type="BioMuta" id="HGNC:39026"/>
<dbReference type="jPOST" id="O71037"/>
<dbReference type="MassIVE" id="O71037"/>
<dbReference type="PeptideAtlas" id="O71037"/>
<dbReference type="GeneCards" id="ERVK-19"/>
<dbReference type="HGNC" id="HGNC:39026">
    <property type="gene designation" value="ERVK-19"/>
</dbReference>
<dbReference type="neXtProt" id="NX_O71037"/>
<dbReference type="PhylomeDB" id="O71037"/>
<dbReference type="Pharos" id="O71037">
    <property type="development level" value="Tdark"/>
</dbReference>
<dbReference type="Proteomes" id="UP000005640">
    <property type="component" value="Unplaced"/>
</dbReference>
<dbReference type="GO" id="GO:0005886">
    <property type="term" value="C:plasma membrane"/>
    <property type="evidence" value="ECO:0007669"/>
    <property type="project" value="UniProtKB-SubCell"/>
</dbReference>
<dbReference type="GO" id="GO:0005198">
    <property type="term" value="F:structural molecule activity"/>
    <property type="evidence" value="ECO:0007669"/>
    <property type="project" value="InterPro"/>
</dbReference>
<dbReference type="CDD" id="cd09909">
    <property type="entry name" value="HIV-1-like_HR1-HR2"/>
    <property type="match status" value="1"/>
</dbReference>
<dbReference type="InterPro" id="IPR000328">
    <property type="entry name" value="GP41-like"/>
</dbReference>
<dbReference type="InterPro" id="IPR029104">
    <property type="entry name" value="HERV-K_env"/>
</dbReference>
<dbReference type="InterPro" id="IPR051255">
    <property type="entry name" value="Retroviral_env_glycoprotein"/>
</dbReference>
<dbReference type="PANTHER" id="PTHR34313">
    <property type="entry name" value="ENDOGENOUS RETROVIRUS GROUP K MEMBER 113 ENV POLYPROTEIN-RELATED"/>
    <property type="match status" value="1"/>
</dbReference>
<dbReference type="PANTHER" id="PTHR34313:SF3">
    <property type="entry name" value="ENDOGENOUS RETROVIRUS GROUP K MEMBER 113 ENV POLYPROTEIN-RELATED"/>
    <property type="match status" value="1"/>
</dbReference>
<dbReference type="Pfam" id="PF00517">
    <property type="entry name" value="GP41"/>
    <property type="match status" value="1"/>
</dbReference>
<dbReference type="Pfam" id="PF13804">
    <property type="entry name" value="HERV-K_env_2"/>
    <property type="match status" value="1"/>
</dbReference>
<dbReference type="Pfam" id="PF15695">
    <property type="entry name" value="HERV-K_REC"/>
    <property type="match status" value="1"/>
</dbReference>
<proteinExistence type="evidence at protein level"/>
<protein>
    <recommendedName>
        <fullName>Endogenous retrovirus group K member 19 Env polyprotein</fullName>
    </recommendedName>
    <alternativeName>
        <fullName>EnvK3 protein</fullName>
    </alternativeName>
    <alternativeName>
        <fullName>Envelope polyprotein</fullName>
    </alternativeName>
    <alternativeName>
        <fullName>HERV-K(C19) envelope protein</fullName>
    </alternativeName>
    <alternativeName>
        <fullName>HERV-K_19q11 provirus ancestral Env polyprotein</fullName>
    </alternativeName>
    <component>
        <recommendedName>
            <fullName>Surface protein</fullName>
            <shortName>SU</shortName>
        </recommendedName>
    </component>
    <component>
        <recommendedName>
            <fullName>Transmembrane protein</fullName>
            <shortName>TM</shortName>
        </recommendedName>
    </component>
</protein>
<accession>O71037</accession>
<accession>Q69386</accession>
<accession>Q9YNA7</accession>
<organism>
    <name type="scientific">Homo sapiens</name>
    <name type="common">Human</name>
    <dbReference type="NCBI Taxonomy" id="9606"/>
    <lineage>
        <taxon>Eukaryota</taxon>
        <taxon>Metazoa</taxon>
        <taxon>Chordata</taxon>
        <taxon>Craniata</taxon>
        <taxon>Vertebrata</taxon>
        <taxon>Euteleostomi</taxon>
        <taxon>Mammalia</taxon>
        <taxon>Eutheria</taxon>
        <taxon>Euarchontoglires</taxon>
        <taxon>Primates</taxon>
        <taxon>Haplorrhini</taxon>
        <taxon>Catarrhini</taxon>
        <taxon>Hominidae</taxon>
        <taxon>Homo</taxon>
    </lineage>
</organism>
<reference key="1">
    <citation type="journal article" date="1999" name="J. Virol.">
        <title>Genome wide screening, cloning, chromosomal assignment and expression of full-length human endogenous retrovirus type K (HERV-K).</title>
        <authorList>
            <person name="Toenjes R.R."/>
            <person name="Czauderna F."/>
            <person name="Kurth R."/>
        </authorList>
    </citation>
    <scope>NUCLEOTIDE SEQUENCE [GENOMIC DNA]</scope>
</reference>
<reference key="2">
    <citation type="journal article" date="1997" name="J. Virol.">
        <title>Expression of human endogenous retrovirus type K envelope glycoprotein in insect and mammalian cells.</title>
        <authorList>
            <person name="Toenjes R.R."/>
            <person name="Limbach C."/>
            <person name="Loewer R."/>
            <person name="Kurth R."/>
        </authorList>
    </citation>
    <scope>NUCLEOTIDE SEQUENCE [GENOMIC DNA] OF 1-514</scope>
</reference>
<reference key="3">
    <citation type="journal article" date="1997" name="Cytogenet. Cell Genet.">
        <title>Chromosomal assignment of human endogenous retrovirus K (HERV-K) env open reading frames.</title>
        <authorList>
            <person name="Mayer J."/>
            <person name="Meese E.U."/>
            <person name="Mueller-Lantzsch N."/>
        </authorList>
    </citation>
    <scope>NUCLEOTIDE SEQUENCE [GENOMIC DNA] OF 1-206</scope>
</reference>
<reference key="4">
    <citation type="journal article" date="2003" name="J. Virol.">
        <title>Survey of human genes of retroviral origin: identification and transcriptome of the genes with coding capacity for complete envelope proteins.</title>
        <authorList>
            <person name="de Parseval N."/>
            <person name="Lazar V."/>
            <person name="Casella J.-F."/>
            <person name="Benit L."/>
            <person name="Heidmann T."/>
        </authorList>
    </citation>
    <scope>CHARACTERIZATION</scope>
</reference>
<reference key="5">
    <citation type="journal article" date="2003" name="Proc. Natl. Acad. Sci. U.S.A.">
        <title>Genomewide screening for fusogenic human endogenous retrovirus envelopes identifies syncytin 2, a gene conserved on primate evolution.</title>
        <authorList>
            <person name="Blaise S."/>
            <person name="de Parseval N."/>
            <person name="Benit L."/>
            <person name="Heidmann T."/>
        </authorList>
    </citation>
    <scope>FUNCTION</scope>
</reference>
<reference key="6">
    <citation type="journal article" date="2003" name="Oncogene">
        <title>Quantitation of HERV-K env gene expression and splicing in human breast cancer.</title>
        <authorList>
            <person name="Wang-Johanning F."/>
            <person name="Frost A.R."/>
            <person name="Jian B."/>
            <person name="Epp L."/>
            <person name="Lu D.W."/>
            <person name="Johanning G.L."/>
        </authorList>
    </citation>
    <scope>SUBGENOMIC RNA</scope>
</reference>
<keyword id="KW-1003">Cell membrane</keyword>
<keyword id="KW-0165">Cleavage on pair of basic residues</keyword>
<keyword id="KW-1015">Disulfide bond</keyword>
<keyword id="KW-0895">ERV</keyword>
<keyword id="KW-0325">Glycoprotein</keyword>
<keyword id="KW-0472">Membrane</keyword>
<keyword id="KW-1185">Reference proteome</keyword>
<keyword id="KW-0732">Signal</keyword>
<keyword id="KW-0812">Transmembrane</keyword>
<keyword id="KW-1133">Transmembrane helix</keyword>
<keyword id="KW-0814">Transposable element</keyword>
<keyword id="KW-0261">Viral envelope protein</keyword>
<keyword id="KW-0946">Virion</keyword>
<sequence length="699" mass="79252">MNPSEMQRKAPPRRRRHRNRAPLTHKMNKMVTSEEQMKLPSTKKAEPPTWAQLKKLTQLATKYLENTKVTQTPESMLLAALMIVSMVVSLPMPAGAAAANYTYWAYVPFPPLIRAVTWMDNPIEVYVNDSVWVPGPTDDHCPAKPEEEGMMINISIGYRYPPICLGRAPGCLMPAVQNWLVEVPTVSPISRFTYHMVSGMSLRPRVNYLQDFSYQRSFKFRPKGKPCPKEIPKESKNTEVLVWEECVANSAVILQNNEFGTIIDWAPRGQFYHNCSGQTQSCPSAQVSPAVDSDLTESLDKHKHKKLQSFYPWEWGEKGISTPRPKIISPVSGPEHPELWRLTVASHHIRIWSGNQTLETRDRKPFYTVDLNSSVTVPLQSCIKPPYMLVVGNIVIKPDSQTITCENCRLLTCIDSTFNWQHRILLVRAREGVWIPVSMDRPWETSPSIHTLTEVLKGVLNRSKRFIFTLIAVIMGLIAVTATAAVAGVALHSSVQSVNFVNDWQKNSTRLWNSQSSIDQKLANQINDLRQTVIWMGDRLMSLEHRFQLQCDWNTSDFSITPQIYNESEHHWDMVRRHLQGREDNLTLDISKLKEQIFEASKAHLNLVPGTEAIAGVADGLANLNPVTWVKTIGSTTIINLILILVCLFCLLLVCRCTQQLRRDSDHRERAMMTMAVLSKRKGGNVGKSKRDQIVTVSV</sequence>
<evidence type="ECO:0000250" key="1"/>
<evidence type="ECO:0000255" key="2"/>
<evidence type="ECO:0000256" key="3">
    <source>
        <dbReference type="SAM" id="MobiDB-lite"/>
    </source>
</evidence>
<evidence type="ECO:0000269" key="4">
    <source>
    </source>
</evidence>
<evidence type="ECO:0000305" key="5"/>
<comment type="function">
    <text evidence="4">Retroviral envelope proteins mediate receptor recognition and membrane fusion during early infection. Endogenous envelope proteins may have kept, lost or modified their original function during evolution. This endogenous envelope protein has lost its original fusogenic properties.</text>
</comment>
<comment type="function">
    <text evidence="1">SU mediates receptor recognition.</text>
</comment>
<comment type="function">
    <text evidence="1">TM anchors the envelope heterodimer to the viral membrane through one transmembrane domain. The other hydrophobic domain, called fusion peptide, mediates fusion of the viral membrane with the target cell membrane (By similarity).</text>
</comment>
<comment type="subunit">
    <text evidence="1">The surface (SU) and transmembrane (TM) proteins form a heterodimer. SU and TM are attached by noncovalent interactions or by a labile interchain disulfide bond (By similarity).</text>
</comment>
<comment type="subcellular location">
    <molecule>Transmembrane protein</molecule>
    <subcellularLocation>
        <location evidence="1">Cell membrane</location>
        <topology evidence="1">Single-pass type I membrane protein</topology>
    </subcellularLocation>
</comment>
<comment type="subcellular location">
    <molecule>Surface protein</molecule>
    <subcellularLocation>
        <location evidence="1">Cell membrane</location>
        <topology evidence="1">Peripheral membrane protein</topology>
    </subcellularLocation>
    <text evidence="1">The surface protein is not anchored to the membrane, but localizes to the extracellular surface through its binding to TM.</text>
</comment>
<comment type="subcellular location">
    <molecule>Endogenous retrovirus group K member 19 Env polyprotein</molecule>
    <subcellularLocation>
        <location evidence="1">Virion</location>
    </subcellularLocation>
</comment>
<comment type="PTM">
    <text evidence="1">Specific enzymatic cleavages in vivo yield the mature SU and TM proteins.</text>
</comment>
<comment type="miscellaneous">
    <text>ERVK-19 has a type 2 genome. The HERV-K(HML-2) family contains type 1 and type 2 genomes depending on the absence or presence of 292 nucleotides at the 5'-end of the env gene resulting in Env proteins of distinct sizes. Despite their overall retroviral envelope structure HERV-K(HML-2) type 1 envelope proteins lack a predictable signal sequence. Subgenomic RNA transcripts coding for full-length envelope proteins have been detected for both type of genomes.</text>
</comment>
<comment type="similarity">
    <text evidence="5">Belongs to the beta type-B retroviral envelope protein family. HERV class-II K(HML-2) env subfamily.</text>
</comment>
<comment type="sequence caution" evidence="5">
    <conflict type="erroneous initiation">
        <sequence resource="EMBL-CDS" id="CAA76883"/>
    </conflict>
</comment>
<name>ENK19_HUMAN</name>
<feature type="signal peptide" evidence="2">
    <location>
        <begin position="1"/>
        <end position="89"/>
    </location>
</feature>
<feature type="chain" id="PRO_0000008503" description="Endogenous retrovirus group K member 19 Env polyprotein">
    <location>
        <begin position="90"/>
        <end position="699"/>
    </location>
</feature>
<feature type="chain" id="PRO_0000008504" description="Surface protein" evidence="1">
    <location>
        <begin position="90"/>
        <end position="465"/>
    </location>
</feature>
<feature type="chain" id="PRO_0000008505" description="Transmembrane protein" evidence="1">
    <location>
        <begin position="466"/>
        <end position="699"/>
    </location>
</feature>
<feature type="topological domain" description="Extracellular" evidence="2">
    <location>
        <begin position="90"/>
        <end position="632"/>
    </location>
</feature>
<feature type="transmembrane region" description="Helical" evidence="2">
    <location>
        <begin position="633"/>
        <end position="653"/>
    </location>
</feature>
<feature type="topological domain" description="Cytoplasmic" evidence="2">
    <location>
        <begin position="654"/>
        <end position="699"/>
    </location>
</feature>
<feature type="region of interest" description="Disordered" evidence="3">
    <location>
        <begin position="1"/>
        <end position="47"/>
    </location>
</feature>
<feature type="region of interest" description="Fusion peptide" evidence="2">
    <location>
        <begin position="466"/>
        <end position="486"/>
    </location>
</feature>
<feature type="compositionally biased region" description="Basic residues" evidence="3">
    <location>
        <begin position="10"/>
        <end position="20"/>
    </location>
</feature>
<feature type="site" description="Cleavage" evidence="1">
    <location>
        <begin position="465"/>
        <end position="466"/>
    </location>
</feature>
<feature type="glycosylation site" description="N-linked (GlcNAc...) asparagine" evidence="2">
    <location>
        <position position="100"/>
    </location>
</feature>
<feature type="glycosylation site" description="N-linked (GlcNAc...) asparagine" evidence="2">
    <location>
        <position position="128"/>
    </location>
</feature>
<feature type="glycosylation site" description="N-linked (GlcNAc...) asparagine" evidence="2">
    <location>
        <position position="153"/>
    </location>
</feature>
<feature type="glycosylation site" description="N-linked (GlcNAc...) asparagine" evidence="2">
    <location>
        <position position="274"/>
    </location>
</feature>
<feature type="glycosylation site" description="N-linked (GlcNAc...) asparagine" evidence="2">
    <location>
        <position position="355"/>
    </location>
</feature>
<feature type="glycosylation site" description="N-linked (GlcNAc...) asparagine" evidence="2">
    <location>
        <position position="372"/>
    </location>
</feature>
<feature type="glycosylation site" description="N-linked (GlcNAc...) asparagine" evidence="2">
    <location>
        <position position="461"/>
    </location>
</feature>
<feature type="glycosylation site" description="N-linked (GlcNAc...) asparagine" evidence="2">
    <location>
        <position position="507"/>
    </location>
</feature>
<feature type="glycosylation site" description="N-linked (GlcNAc...) asparagine" evidence="2">
    <location>
        <position position="554"/>
    </location>
</feature>
<feature type="glycosylation site" description="N-linked (GlcNAc...) asparagine" evidence="2">
    <location>
        <position position="566"/>
    </location>
</feature>
<feature type="glycosylation site" description="N-linked (GlcNAc...) asparagine" evidence="2">
    <location>
        <position position="585"/>
    </location>
</feature>
<gene>
    <name type="primary">ERVK-19</name>
</gene>